<organism>
    <name type="scientific">Bat coronavirus HKU9</name>
    <name type="common">BtCoV</name>
    <name type="synonym">BtCoV/HKU9</name>
    <dbReference type="NCBI Taxonomy" id="694006"/>
    <lineage>
        <taxon>Viruses</taxon>
        <taxon>Riboviria</taxon>
        <taxon>Orthornavirae</taxon>
        <taxon>Pisuviricota</taxon>
        <taxon>Pisoniviricetes</taxon>
        <taxon>Nidovirales</taxon>
        <taxon>Cornidovirineae</taxon>
        <taxon>Coronaviridae</taxon>
        <taxon>Orthocoronavirinae</taxon>
        <taxon>Betacoronavirus</taxon>
        <taxon>Nobecovirus</taxon>
    </lineage>
</organism>
<reference key="1">
    <citation type="journal article" date="2007" name="J. Virol.">
        <title>Comparative analysis of twelve genomes of three novel group 2c and group 2d coronaviruses reveals unique group and subgroup features.</title>
        <authorList>
            <person name="Woo P.C.Y."/>
            <person name="Wang M."/>
            <person name="Lau S.K.P."/>
            <person name="Xu H.F."/>
            <person name="Poon R.W.S."/>
            <person name="Guo R."/>
            <person name="Wong B.H.L."/>
            <person name="Gao K."/>
            <person name="Tsoi H.-W."/>
            <person name="Huang Y."/>
            <person name="Li K.S.M."/>
            <person name="Lam C.S.F."/>
            <person name="Chan K.-H."/>
            <person name="Zheng B.-J."/>
            <person name="Yuen K.-Y."/>
        </authorList>
    </citation>
    <scope>NUCLEOTIDE SEQUENCE [GENOMIC RNA]</scope>
    <source>
        <strain>Isolate HKU9-1</strain>
    </source>
</reference>
<organismHost>
    <name type="scientific">Rousettus leschenaultii</name>
    <name type="common">Leschenault's rousette</name>
    <name type="synonym">Pteropus leschenaultii</name>
    <dbReference type="NCBI Taxonomy" id="9408"/>
</organismHost>
<name>NS7B_BCHK9</name>
<sequence>MDPAFGNALAANVLLNICQQMQTDIHQHGFHISGNSFCRAVAWCLARLSEEFDVPDETPFIYILCHRPYLLLRAALELEVTVGNLRTLLVMVRTIMQYDTSRTATHGMYAALAAYFHRFPADFRFQFLLSEDRDWPLHIKCDLVRETTV</sequence>
<feature type="chain" id="PRO_0000291333" description="Non-structural protein 7b">
    <location>
        <begin position="1"/>
        <end position="149"/>
    </location>
</feature>
<gene>
    <name type="ORF">7b</name>
</gene>
<accession>A3EXH2</accession>
<protein>
    <recommendedName>
        <fullName>Non-structural protein 7b</fullName>
        <shortName>ns7b</shortName>
    </recommendedName>
    <alternativeName>
        <fullName>Accessory protein 7b</fullName>
    </alternativeName>
</protein>
<keyword id="KW-1185">Reference proteome</keyword>
<proteinExistence type="predicted"/>
<dbReference type="EMBL" id="EF065513">
    <property type="protein sequence ID" value="ABN10917.1"/>
    <property type="molecule type" value="Genomic_RNA"/>
</dbReference>
<dbReference type="KEGG" id="vg:4836011"/>
<dbReference type="OrthoDB" id="33897at10239"/>
<dbReference type="Proteomes" id="UP000006576">
    <property type="component" value="Genome"/>
</dbReference>